<evidence type="ECO:0000255" key="1"/>
<evidence type="ECO:0000269" key="2">
    <source>
    </source>
</evidence>
<evidence type="ECO:0000305" key="3"/>
<dbReference type="EMBL" id="AC007019">
    <property type="protein sequence ID" value="AAD20395.1"/>
    <property type="molecule type" value="Genomic_DNA"/>
</dbReference>
<dbReference type="EMBL" id="CP002685">
    <property type="protein sequence ID" value="AEC07219.1"/>
    <property type="molecule type" value="Genomic_DNA"/>
</dbReference>
<dbReference type="EMBL" id="DQ446545">
    <property type="protein sequence ID" value="ABE65457.1"/>
    <property type="molecule type" value="Genomic_DNA"/>
</dbReference>
<dbReference type="EMBL" id="DQ653012">
    <property type="protein sequence ID" value="ABK28195.1"/>
    <property type="status" value="ALT_SEQ"/>
    <property type="molecule type" value="Genomic_DNA"/>
</dbReference>
<dbReference type="PIR" id="G84604">
    <property type="entry name" value="G84604"/>
</dbReference>
<dbReference type="RefSeq" id="NP_179767.1">
    <property type="nucleotide sequence ID" value="NM_127745.2"/>
</dbReference>
<dbReference type="STRING" id="3702.Q9SJ23"/>
<dbReference type="PaxDb" id="3702-AT2G21750.1"/>
<dbReference type="EnsemblPlants" id="AT2G21750.1">
    <property type="protein sequence ID" value="AT2G21750.1"/>
    <property type="gene ID" value="AT2G21750"/>
</dbReference>
<dbReference type="GeneID" id="816712"/>
<dbReference type="Gramene" id="AT2G21750.1">
    <property type="protein sequence ID" value="AT2G21750.1"/>
    <property type="gene ID" value="AT2G21750"/>
</dbReference>
<dbReference type="KEGG" id="ath:AT2G21750"/>
<dbReference type="Araport" id="AT2G21750"/>
<dbReference type="TAIR" id="AT2G21750">
    <property type="gene designation" value="EC1.3"/>
</dbReference>
<dbReference type="eggNOG" id="ENOG502S3PF">
    <property type="taxonomic scope" value="Eukaryota"/>
</dbReference>
<dbReference type="HOGENOM" id="CLU_128969_2_0_1"/>
<dbReference type="InParanoid" id="Q9SJ23"/>
<dbReference type="OMA" id="VITHHCW"/>
<dbReference type="PhylomeDB" id="Q9SJ23"/>
<dbReference type="PRO" id="PR:Q9SJ23"/>
<dbReference type="Proteomes" id="UP000006548">
    <property type="component" value="Chromosome 2"/>
</dbReference>
<dbReference type="ExpressionAtlas" id="Q9SJ23">
    <property type="expression patterns" value="baseline"/>
</dbReference>
<dbReference type="GO" id="GO:0031410">
    <property type="term" value="C:cytoplasmic vesicle"/>
    <property type="evidence" value="ECO:0007669"/>
    <property type="project" value="UniProtKB-KW"/>
</dbReference>
<dbReference type="GO" id="GO:0005576">
    <property type="term" value="C:extracellular region"/>
    <property type="evidence" value="ECO:0000314"/>
    <property type="project" value="UniProtKB"/>
</dbReference>
<dbReference type="GO" id="GO:0031982">
    <property type="term" value="C:vesicle"/>
    <property type="evidence" value="ECO:0000314"/>
    <property type="project" value="UniProtKB"/>
</dbReference>
<dbReference type="GO" id="GO:0009567">
    <property type="term" value="P:double fertilization forming a zygote and endosperm"/>
    <property type="evidence" value="ECO:0000316"/>
    <property type="project" value="TAIR"/>
</dbReference>
<dbReference type="GO" id="GO:0080155">
    <property type="term" value="P:regulation of double fertilization forming a zygote and endosperm"/>
    <property type="evidence" value="ECO:0000315"/>
    <property type="project" value="UniProtKB"/>
</dbReference>
<dbReference type="GO" id="GO:2000008">
    <property type="term" value="P:regulation of protein localization to cell surface"/>
    <property type="evidence" value="ECO:0000315"/>
    <property type="project" value="UniProtKB"/>
</dbReference>
<dbReference type="InterPro" id="IPR044711">
    <property type="entry name" value="EC11-15"/>
</dbReference>
<dbReference type="InterPro" id="IPR008502">
    <property type="entry name" value="Prolamin-like"/>
</dbReference>
<dbReference type="PANTHER" id="PTHR35293:SF10">
    <property type="entry name" value="EGG CELL-SECRETED PROTEIN 1.2-RELATED"/>
    <property type="match status" value="1"/>
</dbReference>
<dbReference type="PANTHER" id="PTHR35293">
    <property type="entry name" value="EGG CELL-SECRETED PROTEIN 1.5"/>
    <property type="match status" value="1"/>
</dbReference>
<dbReference type="Pfam" id="PF05617">
    <property type="entry name" value="Prolamin_like"/>
    <property type="match status" value="1"/>
</dbReference>
<proteinExistence type="evidence at transcript level"/>
<feature type="signal peptide" evidence="1">
    <location>
        <begin position="1"/>
        <end position="24"/>
    </location>
</feature>
<feature type="chain" id="PRO_0000421243" description="Egg cell-secreted protein 1.3">
    <location>
        <begin position="25"/>
        <end position="125"/>
    </location>
</feature>
<gene>
    <name type="primary">EC1.3</name>
    <name type="ordered locus">At2g21750</name>
    <name type="ORF">F7D8.7</name>
</gene>
<accession>Q9SJ23</accession>
<accession>A0MEP0</accession>
<reference key="1">
    <citation type="journal article" date="1999" name="Nature">
        <title>Sequence and analysis of chromosome 2 of the plant Arabidopsis thaliana.</title>
        <authorList>
            <person name="Lin X."/>
            <person name="Kaul S."/>
            <person name="Rounsley S.D."/>
            <person name="Shea T.P."/>
            <person name="Benito M.-I."/>
            <person name="Town C.D."/>
            <person name="Fujii C.Y."/>
            <person name="Mason T.M."/>
            <person name="Bowman C.L."/>
            <person name="Barnstead M.E."/>
            <person name="Feldblyum T.V."/>
            <person name="Buell C.R."/>
            <person name="Ketchum K.A."/>
            <person name="Lee J.J."/>
            <person name="Ronning C.M."/>
            <person name="Koo H.L."/>
            <person name="Moffat K.S."/>
            <person name="Cronin L.A."/>
            <person name="Shen M."/>
            <person name="Pai G."/>
            <person name="Van Aken S."/>
            <person name="Umayam L."/>
            <person name="Tallon L.J."/>
            <person name="Gill J.E."/>
            <person name="Adams M.D."/>
            <person name="Carrera A.J."/>
            <person name="Creasy T.H."/>
            <person name="Goodman H.M."/>
            <person name="Somerville C.R."/>
            <person name="Copenhaver G.P."/>
            <person name="Preuss D."/>
            <person name="Nierman W.C."/>
            <person name="White O."/>
            <person name="Eisen J.A."/>
            <person name="Salzberg S.L."/>
            <person name="Fraser C.M."/>
            <person name="Venter J.C."/>
        </authorList>
    </citation>
    <scope>NUCLEOTIDE SEQUENCE [LARGE SCALE GENOMIC DNA]</scope>
    <source>
        <strain>cv. Columbia</strain>
    </source>
</reference>
<reference key="2">
    <citation type="journal article" date="2017" name="Plant J.">
        <title>Araport11: a complete reannotation of the Arabidopsis thaliana reference genome.</title>
        <authorList>
            <person name="Cheng C.Y."/>
            <person name="Krishnakumar V."/>
            <person name="Chan A.P."/>
            <person name="Thibaud-Nissen F."/>
            <person name="Schobel S."/>
            <person name="Town C.D."/>
        </authorList>
    </citation>
    <scope>GENOME REANNOTATION</scope>
    <source>
        <strain>cv. Columbia</strain>
    </source>
</reference>
<reference key="3">
    <citation type="journal article" date="2006" name="Plant Biotechnol. J.">
        <title>Simultaneous high-throughput recombinational cloning of open reading frames in closed and open configurations.</title>
        <authorList>
            <person name="Underwood B.A."/>
            <person name="Vanderhaeghen R."/>
            <person name="Whitford R."/>
            <person name="Town C.D."/>
            <person name="Hilson P."/>
        </authorList>
    </citation>
    <scope>NUCLEOTIDE SEQUENCE [LARGE SCALE GENOMIC DNA]</scope>
    <source>
        <strain>cv. Columbia</strain>
    </source>
</reference>
<reference key="4">
    <citation type="journal article" date="2012" name="Science">
        <title>Egg cell-secreted EC1 triggers sperm cell activation during double fertilization.</title>
        <authorList>
            <person name="Sprunck S."/>
            <person name="Rademacher S."/>
            <person name="Vogler F."/>
            <person name="Gheyselinck J."/>
            <person name="Grossniklaus U."/>
            <person name="Dresselhaus T."/>
        </authorList>
    </citation>
    <scope>FUNCTION</scope>
    <scope>TISSUE SPECIFICITY</scope>
    <scope>DEVELOPMENTAL STAGE</scope>
    <scope>SUBCELLULAR LOCATION</scope>
</reference>
<keyword id="KW-0968">Cytoplasmic vesicle</keyword>
<keyword id="KW-0278">Fertilization</keyword>
<keyword id="KW-1185">Reference proteome</keyword>
<keyword id="KW-0964">Secreted</keyword>
<keyword id="KW-0732">Signal</keyword>
<comment type="function">
    <text evidence="2">Involved in the regulation of gamete interactions during the double fertilization and to prevent multiple-pollen tube attraction; mediates the redistribution of the gamete fusogen HAP2/GCS1 to the cell surface after secretion upon sperm arrival.</text>
</comment>
<comment type="subcellular location">
    <subcellularLocation>
        <location evidence="2">Cytoplasmic vesicle</location>
    </subcellularLocation>
    <subcellularLocation>
        <location evidence="2">Secreted</location>
    </subcellularLocation>
    <text>Secreted via vesicle exocytose upon sperm arrival, especially in the apical region of the degenerating synergid cell.</text>
</comment>
<comment type="tissue specificity">
    <text evidence="2">Restricted to female reproductive tissues, specifically accumulating in storage vesicles of the unfertilized egg cell.</text>
</comment>
<comment type="developmental stage">
    <text evidence="2">Confined to the egg cell before fertilization, but disappears upon gamete fusion. Also present in zygotes and early embryos.</text>
</comment>
<comment type="similarity">
    <text evidence="3">Belongs to the plant egg cell-secreted peptide family.</text>
</comment>
<comment type="sequence caution" evidence="3">
    <conflict type="erroneous termination">
        <sequence resource="EMBL-CDS" id="ABK28195"/>
    </conflict>
    <text>Extended C-terminus.</text>
</comment>
<name>EC13_ARATH</name>
<organism>
    <name type="scientific">Arabidopsis thaliana</name>
    <name type="common">Mouse-ear cress</name>
    <dbReference type="NCBI Taxonomy" id="3702"/>
    <lineage>
        <taxon>Eukaryota</taxon>
        <taxon>Viridiplantae</taxon>
        <taxon>Streptophyta</taxon>
        <taxon>Embryophyta</taxon>
        <taxon>Tracheophyta</taxon>
        <taxon>Spermatophyta</taxon>
        <taxon>Magnoliopsida</taxon>
        <taxon>eudicotyledons</taxon>
        <taxon>Gunneridae</taxon>
        <taxon>Pentapetalae</taxon>
        <taxon>rosids</taxon>
        <taxon>malvids</taxon>
        <taxon>Brassicales</taxon>
        <taxon>Brassicaceae</taxon>
        <taxon>Camelineae</taxon>
        <taxon>Arabidopsis</taxon>
    </lineage>
</organism>
<sequence>MASNTSFLFVTVTLLLVLNVSSRALPPVADSTNIAARLTGGGLMQCWDALYELKSCTNEIVLFFLNGETKLGYGCCNAVDVITTDCWPAMLTSLGFTLEETNVLRGFCQSPNSGGSSPALSPVKL</sequence>
<protein>
    <recommendedName>
        <fullName>Egg cell-secreted protein 1.3</fullName>
    </recommendedName>
</protein>